<gene>
    <name evidence="1" type="primary">ruvB</name>
    <name type="ordered locus">LIC_12811</name>
</gene>
<protein>
    <recommendedName>
        <fullName evidence="1">Holliday junction branch migration complex subunit RuvB</fullName>
        <ecNumber evidence="1">3.6.4.-</ecNumber>
    </recommendedName>
</protein>
<proteinExistence type="inferred from homology"/>
<organism>
    <name type="scientific">Leptospira interrogans serogroup Icterohaemorrhagiae serovar copenhageni (strain Fiocruz L1-130)</name>
    <dbReference type="NCBI Taxonomy" id="267671"/>
    <lineage>
        <taxon>Bacteria</taxon>
        <taxon>Pseudomonadati</taxon>
        <taxon>Spirochaetota</taxon>
        <taxon>Spirochaetia</taxon>
        <taxon>Leptospirales</taxon>
        <taxon>Leptospiraceae</taxon>
        <taxon>Leptospira</taxon>
    </lineage>
</organism>
<name>RUVB_LEPIC</name>
<accession>P61534</accession>
<reference key="1">
    <citation type="journal article" date="2004" name="J. Bacteriol.">
        <title>Comparative genomics of two Leptospira interrogans serovars reveals novel insights into physiology and pathogenesis.</title>
        <authorList>
            <person name="Nascimento A.L.T.O."/>
            <person name="Ko A.I."/>
            <person name="Martins E.A.L."/>
            <person name="Monteiro-Vitorello C.B."/>
            <person name="Ho P.L."/>
            <person name="Haake D.A."/>
            <person name="Verjovski-Almeida S."/>
            <person name="Hartskeerl R.A."/>
            <person name="Marques M.V."/>
            <person name="Oliveira M.C."/>
            <person name="Menck C.F.M."/>
            <person name="Leite L.C.C."/>
            <person name="Carrer H."/>
            <person name="Coutinho L.L."/>
            <person name="Degrave W.M."/>
            <person name="Dellagostin O.A."/>
            <person name="El-Dorry H."/>
            <person name="Ferro E.S."/>
            <person name="Ferro M.I.T."/>
            <person name="Furlan L.R."/>
            <person name="Gamberini M."/>
            <person name="Giglioti E.A."/>
            <person name="Goes-Neto A."/>
            <person name="Goldman G.H."/>
            <person name="Goldman M.H.S."/>
            <person name="Harakava R."/>
            <person name="Jeronimo S.M.B."/>
            <person name="Junqueira-de-Azevedo I.L.M."/>
            <person name="Kimura E.T."/>
            <person name="Kuramae E.E."/>
            <person name="Lemos E.G.M."/>
            <person name="Lemos M.V.F."/>
            <person name="Marino C.L."/>
            <person name="Nunes L.R."/>
            <person name="de Oliveira R.C."/>
            <person name="Pereira G.G."/>
            <person name="Reis M.S."/>
            <person name="Schriefer A."/>
            <person name="Siqueira W.J."/>
            <person name="Sommer P."/>
            <person name="Tsai S.M."/>
            <person name="Simpson A.J.G."/>
            <person name="Ferro J.A."/>
            <person name="Camargo L.E.A."/>
            <person name="Kitajima J.P."/>
            <person name="Setubal J.C."/>
            <person name="Van Sluys M.A."/>
        </authorList>
    </citation>
    <scope>NUCLEOTIDE SEQUENCE [LARGE SCALE GENOMIC DNA]</scope>
    <source>
        <strain>Fiocruz L1-130</strain>
    </source>
</reference>
<dbReference type="EC" id="3.6.4.-" evidence="1"/>
<dbReference type="EMBL" id="AE016823">
    <property type="protein sequence ID" value="AAS71365.1"/>
    <property type="molecule type" value="Genomic_DNA"/>
</dbReference>
<dbReference type="RefSeq" id="WP_001129835.1">
    <property type="nucleotide sequence ID" value="NC_005823.1"/>
</dbReference>
<dbReference type="SMR" id="P61534"/>
<dbReference type="GeneID" id="61142686"/>
<dbReference type="KEGG" id="lic:LIC_12811"/>
<dbReference type="HOGENOM" id="CLU_055599_1_0_12"/>
<dbReference type="Proteomes" id="UP000007037">
    <property type="component" value="Chromosome I"/>
</dbReference>
<dbReference type="GO" id="GO:0005737">
    <property type="term" value="C:cytoplasm"/>
    <property type="evidence" value="ECO:0007669"/>
    <property type="project" value="UniProtKB-SubCell"/>
</dbReference>
<dbReference type="GO" id="GO:0048476">
    <property type="term" value="C:Holliday junction resolvase complex"/>
    <property type="evidence" value="ECO:0007669"/>
    <property type="project" value="UniProtKB-UniRule"/>
</dbReference>
<dbReference type="GO" id="GO:0005524">
    <property type="term" value="F:ATP binding"/>
    <property type="evidence" value="ECO:0007669"/>
    <property type="project" value="UniProtKB-UniRule"/>
</dbReference>
<dbReference type="GO" id="GO:0016887">
    <property type="term" value="F:ATP hydrolysis activity"/>
    <property type="evidence" value="ECO:0007669"/>
    <property type="project" value="InterPro"/>
</dbReference>
<dbReference type="GO" id="GO:0000400">
    <property type="term" value="F:four-way junction DNA binding"/>
    <property type="evidence" value="ECO:0007669"/>
    <property type="project" value="UniProtKB-UniRule"/>
</dbReference>
<dbReference type="GO" id="GO:0009378">
    <property type="term" value="F:four-way junction helicase activity"/>
    <property type="evidence" value="ECO:0007669"/>
    <property type="project" value="InterPro"/>
</dbReference>
<dbReference type="GO" id="GO:0006310">
    <property type="term" value="P:DNA recombination"/>
    <property type="evidence" value="ECO:0007669"/>
    <property type="project" value="UniProtKB-UniRule"/>
</dbReference>
<dbReference type="GO" id="GO:0006281">
    <property type="term" value="P:DNA repair"/>
    <property type="evidence" value="ECO:0007669"/>
    <property type="project" value="UniProtKB-UniRule"/>
</dbReference>
<dbReference type="CDD" id="cd00009">
    <property type="entry name" value="AAA"/>
    <property type="match status" value="1"/>
</dbReference>
<dbReference type="Gene3D" id="1.10.8.60">
    <property type="match status" value="1"/>
</dbReference>
<dbReference type="Gene3D" id="3.40.50.300">
    <property type="entry name" value="P-loop containing nucleotide triphosphate hydrolases"/>
    <property type="match status" value="1"/>
</dbReference>
<dbReference type="Gene3D" id="1.10.10.10">
    <property type="entry name" value="Winged helix-like DNA-binding domain superfamily/Winged helix DNA-binding domain"/>
    <property type="match status" value="1"/>
</dbReference>
<dbReference type="HAMAP" id="MF_00016">
    <property type="entry name" value="DNA_HJ_migration_RuvB"/>
    <property type="match status" value="1"/>
</dbReference>
<dbReference type="InterPro" id="IPR003593">
    <property type="entry name" value="AAA+_ATPase"/>
</dbReference>
<dbReference type="InterPro" id="IPR041445">
    <property type="entry name" value="AAA_lid_4"/>
</dbReference>
<dbReference type="InterPro" id="IPR004605">
    <property type="entry name" value="DNA_helicase_Holl-junc_RuvB"/>
</dbReference>
<dbReference type="InterPro" id="IPR027417">
    <property type="entry name" value="P-loop_NTPase"/>
</dbReference>
<dbReference type="InterPro" id="IPR008824">
    <property type="entry name" value="RuvB-like_N"/>
</dbReference>
<dbReference type="InterPro" id="IPR008823">
    <property type="entry name" value="RuvB_C"/>
</dbReference>
<dbReference type="InterPro" id="IPR036388">
    <property type="entry name" value="WH-like_DNA-bd_sf"/>
</dbReference>
<dbReference type="InterPro" id="IPR036390">
    <property type="entry name" value="WH_DNA-bd_sf"/>
</dbReference>
<dbReference type="NCBIfam" id="NF000868">
    <property type="entry name" value="PRK00080.1"/>
    <property type="match status" value="1"/>
</dbReference>
<dbReference type="NCBIfam" id="TIGR00635">
    <property type="entry name" value="ruvB"/>
    <property type="match status" value="1"/>
</dbReference>
<dbReference type="PANTHER" id="PTHR42848">
    <property type="match status" value="1"/>
</dbReference>
<dbReference type="PANTHER" id="PTHR42848:SF1">
    <property type="entry name" value="HOLLIDAY JUNCTION BRANCH MIGRATION COMPLEX SUBUNIT RUVB"/>
    <property type="match status" value="1"/>
</dbReference>
<dbReference type="Pfam" id="PF17864">
    <property type="entry name" value="AAA_lid_4"/>
    <property type="match status" value="1"/>
</dbReference>
<dbReference type="Pfam" id="PF05491">
    <property type="entry name" value="RuvB_C"/>
    <property type="match status" value="1"/>
</dbReference>
<dbReference type="Pfam" id="PF05496">
    <property type="entry name" value="RuvB_N"/>
    <property type="match status" value="1"/>
</dbReference>
<dbReference type="SMART" id="SM00382">
    <property type="entry name" value="AAA"/>
    <property type="match status" value="1"/>
</dbReference>
<dbReference type="SUPFAM" id="SSF52540">
    <property type="entry name" value="P-loop containing nucleoside triphosphate hydrolases"/>
    <property type="match status" value="1"/>
</dbReference>
<dbReference type="SUPFAM" id="SSF46785">
    <property type="entry name" value="Winged helix' DNA-binding domain"/>
    <property type="match status" value="1"/>
</dbReference>
<sequence length="341" mass="38035">MAKSHTLNPEEEFEEESGLRPSLLSEFIGQKEVLNNLTVYVQAAKNRKRALDHVLISGPPGLGKTTLAGIISNELGTRLTITSAPVITKGADLARLLTSMGENEILFIDEIHTLPKKLEEILYPAMENYMIDLVIGEGVTAQMVQIPLKPFTLVGATTRSGLISEPLKSRFGIQLRLDYYNDEEMKQIVLRSSKILGVLIEDDAALEIGKRSRKTPRIANHLLKRIRDFSEVEGNLSVKKNLCLKAFEKMGIDDLGLDGMDRQILDCMIDRYKGGPVGLKAIAVVVGEEEKTIEDTYESFMVRIGLINRTPAGRVATEKAYRQLKRMEDFSVHHGQDPTLF</sequence>
<comment type="function">
    <text evidence="1">The RuvA-RuvB-RuvC complex processes Holliday junction (HJ) DNA during genetic recombination and DNA repair, while the RuvA-RuvB complex plays an important role in the rescue of blocked DNA replication forks via replication fork reversal (RFR). RuvA specifically binds to HJ cruciform DNA, conferring on it an open structure. The RuvB hexamer acts as an ATP-dependent pump, pulling dsDNA into and through the RuvAB complex. RuvB forms 2 homohexamers on either side of HJ DNA bound by 1 or 2 RuvA tetramers; 4 subunits per hexamer contact DNA at a time. Coordinated motions by a converter formed by DNA-disengaged RuvB subunits stimulates ATP hydrolysis and nucleotide exchange. Immobilization of the converter enables RuvB to convert the ATP-contained energy into a lever motion, pulling 2 nucleotides of DNA out of the RuvA tetramer per ATP hydrolyzed, thus driving DNA branch migration. The RuvB motors rotate together with the DNA substrate, which together with the progressing nucleotide cycle form the mechanistic basis for DNA recombination by continuous HJ branch migration. Branch migration allows RuvC to scan DNA until it finds its consensus sequence, where it cleaves and resolves cruciform DNA.</text>
</comment>
<comment type="catalytic activity">
    <reaction evidence="1">
        <text>ATP + H2O = ADP + phosphate + H(+)</text>
        <dbReference type="Rhea" id="RHEA:13065"/>
        <dbReference type="ChEBI" id="CHEBI:15377"/>
        <dbReference type="ChEBI" id="CHEBI:15378"/>
        <dbReference type="ChEBI" id="CHEBI:30616"/>
        <dbReference type="ChEBI" id="CHEBI:43474"/>
        <dbReference type="ChEBI" id="CHEBI:456216"/>
    </reaction>
</comment>
<comment type="subunit">
    <text evidence="1">Homohexamer. Forms an RuvA(8)-RuvB(12)-Holliday junction (HJ) complex. HJ DNA is sandwiched between 2 RuvA tetramers; dsDNA enters through RuvA and exits via RuvB. An RuvB hexamer assembles on each DNA strand where it exits the tetramer. Each RuvB hexamer is contacted by two RuvA subunits (via domain III) on 2 adjacent RuvB subunits; this complex drives branch migration. In the full resolvosome a probable DNA-RuvA(4)-RuvB(12)-RuvC(2) complex forms which resolves the HJ.</text>
</comment>
<comment type="subcellular location">
    <subcellularLocation>
        <location evidence="1">Cytoplasm</location>
    </subcellularLocation>
</comment>
<comment type="domain">
    <text evidence="1">Has 3 domains, the large (RuvB-L) and small ATPase (RuvB-S) domains and the C-terminal head (RuvB-H) domain. The head domain binds DNA, while the ATPase domains jointly bind ATP, ADP or are empty depending on the state of the subunit in the translocation cycle. During a single DNA translocation step the structure of each domain remains the same, but their relative positions change.</text>
</comment>
<comment type="similarity">
    <text evidence="1">Belongs to the RuvB family.</text>
</comment>
<evidence type="ECO:0000255" key="1">
    <source>
        <dbReference type="HAMAP-Rule" id="MF_00016"/>
    </source>
</evidence>
<keyword id="KW-0067">ATP-binding</keyword>
<keyword id="KW-0963">Cytoplasm</keyword>
<keyword id="KW-0227">DNA damage</keyword>
<keyword id="KW-0233">DNA recombination</keyword>
<keyword id="KW-0234">DNA repair</keyword>
<keyword id="KW-0238">DNA-binding</keyword>
<keyword id="KW-0378">Hydrolase</keyword>
<keyword id="KW-0547">Nucleotide-binding</keyword>
<feature type="chain" id="PRO_0000165549" description="Holliday junction branch migration complex subunit RuvB">
    <location>
        <begin position="1"/>
        <end position="341"/>
    </location>
</feature>
<feature type="region of interest" description="Large ATPase domain (RuvB-L)" evidence="1">
    <location>
        <begin position="1"/>
        <end position="180"/>
    </location>
</feature>
<feature type="region of interest" description="Small ATPAse domain (RuvB-S)" evidence="1">
    <location>
        <begin position="181"/>
        <end position="251"/>
    </location>
</feature>
<feature type="region of interest" description="Head domain (RuvB-H)" evidence="1">
    <location>
        <begin position="254"/>
        <end position="341"/>
    </location>
</feature>
<feature type="binding site" evidence="1">
    <location>
        <position position="19"/>
    </location>
    <ligand>
        <name>ATP</name>
        <dbReference type="ChEBI" id="CHEBI:30616"/>
    </ligand>
</feature>
<feature type="binding site" evidence="1">
    <location>
        <position position="20"/>
    </location>
    <ligand>
        <name>ATP</name>
        <dbReference type="ChEBI" id="CHEBI:30616"/>
    </ligand>
</feature>
<feature type="binding site" evidence="1">
    <location>
        <position position="61"/>
    </location>
    <ligand>
        <name>ATP</name>
        <dbReference type="ChEBI" id="CHEBI:30616"/>
    </ligand>
</feature>
<feature type="binding site" evidence="1">
    <location>
        <position position="64"/>
    </location>
    <ligand>
        <name>ATP</name>
        <dbReference type="ChEBI" id="CHEBI:30616"/>
    </ligand>
</feature>
<feature type="binding site" evidence="1">
    <location>
        <position position="65"/>
    </location>
    <ligand>
        <name>ATP</name>
        <dbReference type="ChEBI" id="CHEBI:30616"/>
    </ligand>
</feature>
<feature type="binding site" evidence="1">
    <location>
        <position position="65"/>
    </location>
    <ligand>
        <name>Mg(2+)</name>
        <dbReference type="ChEBI" id="CHEBI:18420"/>
    </ligand>
</feature>
<feature type="binding site" evidence="1">
    <location>
        <position position="66"/>
    </location>
    <ligand>
        <name>ATP</name>
        <dbReference type="ChEBI" id="CHEBI:30616"/>
    </ligand>
</feature>
<feature type="binding site" evidence="1">
    <location>
        <position position="170"/>
    </location>
    <ligand>
        <name>ATP</name>
        <dbReference type="ChEBI" id="CHEBI:30616"/>
    </ligand>
</feature>
<feature type="binding site" evidence="1">
    <location>
        <position position="180"/>
    </location>
    <ligand>
        <name>ATP</name>
        <dbReference type="ChEBI" id="CHEBI:30616"/>
    </ligand>
</feature>
<feature type="binding site" evidence="1">
    <location>
        <position position="217"/>
    </location>
    <ligand>
        <name>ATP</name>
        <dbReference type="ChEBI" id="CHEBI:30616"/>
    </ligand>
</feature>
<feature type="binding site" evidence="1">
    <location>
        <position position="309"/>
    </location>
    <ligand>
        <name>DNA</name>
        <dbReference type="ChEBI" id="CHEBI:16991"/>
    </ligand>
</feature>
<feature type="binding site" evidence="1">
    <location>
        <position position="314"/>
    </location>
    <ligand>
        <name>DNA</name>
        <dbReference type="ChEBI" id="CHEBI:16991"/>
    </ligand>
</feature>